<comment type="catalytic activity">
    <reaction>
        <text>4-aminobutanoate + 2-oxoglutarate = succinate semialdehyde + L-glutamate</text>
        <dbReference type="Rhea" id="RHEA:23352"/>
        <dbReference type="ChEBI" id="CHEBI:16810"/>
        <dbReference type="ChEBI" id="CHEBI:29985"/>
        <dbReference type="ChEBI" id="CHEBI:57706"/>
        <dbReference type="ChEBI" id="CHEBI:59888"/>
        <dbReference type="EC" id="2.6.1.19"/>
    </reaction>
</comment>
<comment type="catalytic activity">
    <reaction>
        <text>(S)-3-amino-2-methylpropanoate + 2-oxoglutarate = 2-methyl-3-oxopropanoate + L-glutamate</text>
        <dbReference type="Rhea" id="RHEA:13993"/>
        <dbReference type="ChEBI" id="CHEBI:16810"/>
        <dbReference type="ChEBI" id="CHEBI:29985"/>
        <dbReference type="ChEBI" id="CHEBI:57700"/>
        <dbReference type="ChEBI" id="CHEBI:58655"/>
        <dbReference type="EC" id="2.6.1.22"/>
    </reaction>
</comment>
<comment type="cofactor">
    <cofactor evidence="1">
        <name>pyridoxal 5'-phosphate</name>
        <dbReference type="ChEBI" id="CHEBI:597326"/>
    </cofactor>
</comment>
<comment type="pathway">
    <text>Amino-acid degradation; 4-aminobutanoate degradation.</text>
</comment>
<comment type="similarity">
    <text evidence="2">Belongs to the class-III pyridoxal-phosphate-dependent aminotransferase family.</text>
</comment>
<evidence type="ECO:0000250" key="1"/>
<evidence type="ECO:0000305" key="2"/>
<keyword id="KW-0032">Aminotransferase</keyword>
<keyword id="KW-0663">Pyridoxal phosphate</keyword>
<keyword id="KW-1185">Reference proteome</keyword>
<keyword id="KW-0808">Transferase</keyword>
<feature type="chain" id="PRO_0000120386" description="4-aminobutyrate aminotransferase">
    <location>
        <begin position="1"/>
        <end position="449"/>
    </location>
</feature>
<feature type="modified residue" description="N6-(pyridoxal phosphate)lysine" evidence="1">
    <location>
        <position position="294"/>
    </location>
</feature>
<gene>
    <name type="primary">gabT</name>
    <name type="ordered locus">Rv2589</name>
    <name type="ORF">MTCY227.12c</name>
</gene>
<accession>P9WQ79</accession>
<accession>L0TA45</accession>
<accession>P63504</accession>
<accession>Q50632</accession>
<dbReference type="EC" id="2.6.1.19"/>
<dbReference type="EC" id="2.6.1.22"/>
<dbReference type="EMBL" id="AL123456">
    <property type="protein sequence ID" value="CCP45385.1"/>
    <property type="molecule type" value="Genomic_DNA"/>
</dbReference>
<dbReference type="PIR" id="D70726">
    <property type="entry name" value="D70726"/>
</dbReference>
<dbReference type="RefSeq" id="NP_217105.1">
    <property type="nucleotide sequence ID" value="NC_000962.3"/>
</dbReference>
<dbReference type="RefSeq" id="WP_003413395.1">
    <property type="nucleotide sequence ID" value="NZ_NVQJ01000023.1"/>
</dbReference>
<dbReference type="SMR" id="P9WQ79"/>
<dbReference type="FunCoup" id="P9WQ79">
    <property type="interactions" value="89"/>
</dbReference>
<dbReference type="STRING" id="83332.Rv2589"/>
<dbReference type="PaxDb" id="83332-Rv2589"/>
<dbReference type="DNASU" id="887915"/>
<dbReference type="GeneID" id="45426591"/>
<dbReference type="GeneID" id="887915"/>
<dbReference type="KEGG" id="mtu:Rv2589"/>
<dbReference type="KEGG" id="mtv:RVBD_2589"/>
<dbReference type="TubercuList" id="Rv2589"/>
<dbReference type="eggNOG" id="COG0160">
    <property type="taxonomic scope" value="Bacteria"/>
</dbReference>
<dbReference type="InParanoid" id="P9WQ79"/>
<dbReference type="OrthoDB" id="9801052at2"/>
<dbReference type="PhylomeDB" id="P9WQ79"/>
<dbReference type="UniPathway" id="UPA00733"/>
<dbReference type="Proteomes" id="UP000001584">
    <property type="component" value="Chromosome"/>
</dbReference>
<dbReference type="GO" id="GO:0005829">
    <property type="term" value="C:cytosol"/>
    <property type="evidence" value="ECO:0000318"/>
    <property type="project" value="GO_Central"/>
</dbReference>
<dbReference type="GO" id="GO:0005886">
    <property type="term" value="C:plasma membrane"/>
    <property type="evidence" value="ECO:0007005"/>
    <property type="project" value="MTBBASE"/>
</dbReference>
<dbReference type="GO" id="GO:0047298">
    <property type="term" value="F:(S)-3-amino-2-methylpropionate transaminase activity"/>
    <property type="evidence" value="ECO:0007669"/>
    <property type="project" value="UniProtKB-EC"/>
</dbReference>
<dbReference type="GO" id="GO:0034386">
    <property type="term" value="F:4-aminobutyrate:2-oxoglutarate transaminase activity"/>
    <property type="evidence" value="ECO:0007669"/>
    <property type="project" value="UniProtKB-EC"/>
</dbReference>
<dbReference type="GO" id="GO:0030170">
    <property type="term" value="F:pyridoxal phosphate binding"/>
    <property type="evidence" value="ECO:0000318"/>
    <property type="project" value="GO_Central"/>
</dbReference>
<dbReference type="GO" id="GO:0009450">
    <property type="term" value="P:gamma-aminobutyric acid catabolic process"/>
    <property type="evidence" value="ECO:0000318"/>
    <property type="project" value="GO_Central"/>
</dbReference>
<dbReference type="CDD" id="cd00610">
    <property type="entry name" value="OAT_like"/>
    <property type="match status" value="1"/>
</dbReference>
<dbReference type="FunFam" id="3.40.640.10:FF:000013">
    <property type="entry name" value="4-aminobutyrate aminotransferase"/>
    <property type="match status" value="1"/>
</dbReference>
<dbReference type="FunFam" id="3.90.1150.10:FF:000022">
    <property type="entry name" value="4-aminobutyrate aminotransferase"/>
    <property type="match status" value="1"/>
</dbReference>
<dbReference type="Gene3D" id="3.90.1150.10">
    <property type="entry name" value="Aspartate Aminotransferase, domain 1"/>
    <property type="match status" value="1"/>
</dbReference>
<dbReference type="Gene3D" id="3.40.640.10">
    <property type="entry name" value="Type I PLP-dependent aspartate aminotransferase-like (Major domain)"/>
    <property type="match status" value="1"/>
</dbReference>
<dbReference type="InterPro" id="IPR004632">
    <property type="entry name" value="4NH2But_aminotransferase_bac"/>
</dbReference>
<dbReference type="InterPro" id="IPR005814">
    <property type="entry name" value="Aminotrans_3"/>
</dbReference>
<dbReference type="InterPro" id="IPR049704">
    <property type="entry name" value="Aminotrans_3_PPA_site"/>
</dbReference>
<dbReference type="InterPro" id="IPR050103">
    <property type="entry name" value="Class-III_PLP-dep_AT"/>
</dbReference>
<dbReference type="InterPro" id="IPR015424">
    <property type="entry name" value="PyrdxlP-dep_Trfase"/>
</dbReference>
<dbReference type="InterPro" id="IPR015421">
    <property type="entry name" value="PyrdxlP-dep_Trfase_major"/>
</dbReference>
<dbReference type="InterPro" id="IPR015422">
    <property type="entry name" value="PyrdxlP-dep_Trfase_small"/>
</dbReference>
<dbReference type="NCBIfam" id="TIGR00700">
    <property type="entry name" value="GABAtrnsam"/>
    <property type="match status" value="1"/>
</dbReference>
<dbReference type="NCBIfam" id="NF004714">
    <property type="entry name" value="PRK06058.1"/>
    <property type="match status" value="1"/>
</dbReference>
<dbReference type="PANTHER" id="PTHR11986">
    <property type="entry name" value="AMINOTRANSFERASE CLASS III"/>
    <property type="match status" value="1"/>
</dbReference>
<dbReference type="Pfam" id="PF00202">
    <property type="entry name" value="Aminotran_3"/>
    <property type="match status" value="1"/>
</dbReference>
<dbReference type="PIRSF" id="PIRSF000521">
    <property type="entry name" value="Transaminase_4ab_Lys_Orn"/>
    <property type="match status" value="1"/>
</dbReference>
<dbReference type="SUPFAM" id="SSF53383">
    <property type="entry name" value="PLP-dependent transferases"/>
    <property type="match status" value="1"/>
</dbReference>
<dbReference type="PROSITE" id="PS00600">
    <property type="entry name" value="AA_TRANSFER_CLASS_3"/>
    <property type="match status" value="1"/>
</dbReference>
<sequence length="449" mass="46813">MASLQQSRRLVTEIPGPASQALTHRRAAAVSSGVGVTLPVFVARAGGGIVEDVDGNRLIDLGSGIAVTTIGNSSPRVVDAVRTQVAEFTHTCFMVTPYEGYVAVAEQLNRITPGSGPKRSVLFNSGAEAVENAVKIARSYTGKPAVVAFDHAYHGRTNLTMALTAKSMPYKSGFGPFAPEIYRAPLSYPYRDGLLDKQLATNGELAAARAIGVIDKQVGANNLAALVIEPIQGEGGFIVPAEGFLPALLDWCRKNHVVFIADEVQTGFARTGAMFACEHEGPDGLEPDLICTAKGIADGLPLSAVTGRAEIMNAPHVGGLGGTFGGNPVACAAALATIATIESDGLIERARQIERLVTDRLTTLQAVDDRIGDVRGRGAMIAVELVKSGTTEPDAGLTERLATAAHAAGVIILTCGMFGNIIRLLPPLTIGDELLSEGLDIVCAILADL</sequence>
<name>GABT_MYCTU</name>
<proteinExistence type="evidence at protein level"/>
<organism>
    <name type="scientific">Mycobacterium tuberculosis (strain ATCC 25618 / H37Rv)</name>
    <dbReference type="NCBI Taxonomy" id="83332"/>
    <lineage>
        <taxon>Bacteria</taxon>
        <taxon>Bacillati</taxon>
        <taxon>Actinomycetota</taxon>
        <taxon>Actinomycetes</taxon>
        <taxon>Mycobacteriales</taxon>
        <taxon>Mycobacteriaceae</taxon>
        <taxon>Mycobacterium</taxon>
        <taxon>Mycobacterium tuberculosis complex</taxon>
    </lineage>
</organism>
<protein>
    <recommendedName>
        <fullName>4-aminobutyrate aminotransferase</fullName>
        <ecNumber>2.6.1.19</ecNumber>
    </recommendedName>
    <alternativeName>
        <fullName>(S)-3-amino-2-methylpropionate transaminase</fullName>
        <ecNumber>2.6.1.22</ecNumber>
    </alternativeName>
    <alternativeName>
        <fullName>GABA aminotransferase</fullName>
        <shortName>GABA-AT</shortName>
    </alternativeName>
    <alternativeName>
        <fullName>Gamma-amino-N-butyrate transaminase</fullName>
        <shortName>GABA transaminase</shortName>
    </alternativeName>
    <alternativeName>
        <fullName>Glutamate:succinic semialdehyde transaminase</fullName>
    </alternativeName>
    <alternativeName>
        <fullName>L-AIBAT</fullName>
    </alternativeName>
</protein>
<reference key="1">
    <citation type="journal article" date="1998" name="Nature">
        <title>Deciphering the biology of Mycobacterium tuberculosis from the complete genome sequence.</title>
        <authorList>
            <person name="Cole S.T."/>
            <person name="Brosch R."/>
            <person name="Parkhill J."/>
            <person name="Garnier T."/>
            <person name="Churcher C.M."/>
            <person name="Harris D.E."/>
            <person name="Gordon S.V."/>
            <person name="Eiglmeier K."/>
            <person name="Gas S."/>
            <person name="Barry C.E. III"/>
            <person name="Tekaia F."/>
            <person name="Badcock K."/>
            <person name="Basham D."/>
            <person name="Brown D."/>
            <person name="Chillingworth T."/>
            <person name="Connor R."/>
            <person name="Davies R.M."/>
            <person name="Devlin K."/>
            <person name="Feltwell T."/>
            <person name="Gentles S."/>
            <person name="Hamlin N."/>
            <person name="Holroyd S."/>
            <person name="Hornsby T."/>
            <person name="Jagels K."/>
            <person name="Krogh A."/>
            <person name="McLean J."/>
            <person name="Moule S."/>
            <person name="Murphy L.D."/>
            <person name="Oliver S."/>
            <person name="Osborne J."/>
            <person name="Quail M.A."/>
            <person name="Rajandream M.A."/>
            <person name="Rogers J."/>
            <person name="Rutter S."/>
            <person name="Seeger K."/>
            <person name="Skelton S."/>
            <person name="Squares S."/>
            <person name="Squares R."/>
            <person name="Sulston J.E."/>
            <person name="Taylor K."/>
            <person name="Whitehead S."/>
            <person name="Barrell B.G."/>
        </authorList>
    </citation>
    <scope>NUCLEOTIDE SEQUENCE [LARGE SCALE GENOMIC DNA]</scope>
    <source>
        <strain>ATCC 25618 / H37Rv</strain>
    </source>
</reference>
<reference key="2">
    <citation type="journal article" date="2011" name="Mol. Cell. Proteomics">
        <title>Proteogenomic analysis of Mycobacterium tuberculosis by high resolution mass spectrometry.</title>
        <authorList>
            <person name="Kelkar D.S."/>
            <person name="Kumar D."/>
            <person name="Kumar P."/>
            <person name="Balakrishnan L."/>
            <person name="Muthusamy B."/>
            <person name="Yadav A.K."/>
            <person name="Shrivastava P."/>
            <person name="Marimuthu A."/>
            <person name="Anand S."/>
            <person name="Sundaram H."/>
            <person name="Kingsbury R."/>
            <person name="Harsha H.C."/>
            <person name="Nair B."/>
            <person name="Prasad T.S."/>
            <person name="Chauhan D.S."/>
            <person name="Katoch K."/>
            <person name="Katoch V.M."/>
            <person name="Kumar P."/>
            <person name="Chaerkady R."/>
            <person name="Ramachandran S."/>
            <person name="Dash D."/>
            <person name="Pandey A."/>
        </authorList>
    </citation>
    <scope>IDENTIFICATION BY MASS SPECTROMETRY [LARGE SCALE ANALYSIS]</scope>
    <source>
        <strain>ATCC 25618 / H37Rv</strain>
    </source>
</reference>